<keyword id="KW-0032">Aminotransferase</keyword>
<keyword id="KW-0663">Pyridoxal phosphate</keyword>
<keyword id="KW-0808">Transferase</keyword>
<sequence>MNRLPSSASALACSAHALNLIEKRTLDHEEMKALNREVIEYFKEHVNPGFLEYRKSVTAGGDYGAVEWQAGGLNTLVDTQGQEFIDCLGGFGIFNVGHRNPVVVSAVQNQLAKQPLHSQELLDPLRAMLAKTLAALTPGKLKYSFFCNSGTESVEAALKLAKAYQSPRGKFTFIATSGAFHGKSLGALSATAKSTFRKPFMPLLPGFRHVPFGNIEAMRTALSECKKTGDDVAAVILEPIQGEGGVILPPPGYLTAVRKLCDEFGALMILDEVQTGMGRTGKMFACEHENVQPDILCLAKALGGGVMPIGATIATEEVFSVLFDNPFLHTTTFGGNPLACAAALATINVLLEQNLPAQAEQKGDMLLDGFRQLAREYPDLVQEARGKGMLMAIEFVDNEIGYNFASEMFRQRVLVAGTLNNAKTIRIEPPLTLTIEQCELVIKAARKALAAMRVSVEEA</sequence>
<organism>
    <name type="scientific">Escherichia coli O17:K52:H18 (strain UMN026 / ExPEC)</name>
    <dbReference type="NCBI Taxonomy" id="585056"/>
    <lineage>
        <taxon>Bacteria</taxon>
        <taxon>Pseudomonadati</taxon>
        <taxon>Pseudomonadota</taxon>
        <taxon>Gammaproteobacteria</taxon>
        <taxon>Enterobacterales</taxon>
        <taxon>Enterobacteriaceae</taxon>
        <taxon>Escherichia</taxon>
    </lineage>
</organism>
<name>PAT_ECOLU</name>
<comment type="function">
    <text evidence="1">Catalyzes the aminotransferase reaction from putrescine to 2-oxoglutarate, leading to glutamate and 4-aminobutanal, which spontaneously cyclizes to form 1-pyrroline. This is the first step in one of two pathways for putrescine degradation, where putrescine is converted into 4-aminobutanoate (gamma-aminobutyrate or GABA) via 4-aminobutanal. Also functions as a cadaverine transaminase in a a L-lysine degradation pathway to succinate that proceeds via cadaverine, glutarate and L-2-hydroxyglutarate.</text>
</comment>
<comment type="catalytic activity">
    <reaction evidence="1">
        <text>an alkane-alpha,omega-diamine + 2-oxoglutarate = an omega-aminoaldehyde + L-glutamate</text>
        <dbReference type="Rhea" id="RHEA:18217"/>
        <dbReference type="Rhea" id="RHEA-COMP:9766"/>
        <dbReference type="Rhea" id="RHEA-COMP:12750"/>
        <dbReference type="ChEBI" id="CHEBI:16810"/>
        <dbReference type="ChEBI" id="CHEBI:29985"/>
        <dbReference type="ChEBI" id="CHEBI:70977"/>
        <dbReference type="ChEBI" id="CHEBI:133427"/>
        <dbReference type="EC" id="2.6.1.29"/>
    </reaction>
    <physiologicalReaction direction="left-to-right" evidence="1">
        <dbReference type="Rhea" id="RHEA:18218"/>
    </physiologicalReaction>
</comment>
<comment type="catalytic activity">
    <reaction evidence="1">
        <text>putrescine + 2-oxoglutarate = 1-pyrroline + L-glutamate + H2O</text>
        <dbReference type="Rhea" id="RHEA:12268"/>
        <dbReference type="ChEBI" id="CHEBI:15377"/>
        <dbReference type="ChEBI" id="CHEBI:16810"/>
        <dbReference type="ChEBI" id="CHEBI:29985"/>
        <dbReference type="ChEBI" id="CHEBI:36781"/>
        <dbReference type="ChEBI" id="CHEBI:326268"/>
        <dbReference type="EC" id="2.6.1.82"/>
    </reaction>
    <physiologicalReaction direction="left-to-right" evidence="1">
        <dbReference type="Rhea" id="RHEA:12269"/>
    </physiologicalReaction>
</comment>
<comment type="catalytic activity">
    <reaction evidence="1">
        <text>cadaverine + 2-oxoglutarate = 5-aminopentanal + L-glutamate</text>
        <dbReference type="Rhea" id="RHEA:61624"/>
        <dbReference type="ChEBI" id="CHEBI:16810"/>
        <dbReference type="ChEBI" id="CHEBI:29985"/>
        <dbReference type="ChEBI" id="CHEBI:58384"/>
        <dbReference type="ChEBI" id="CHEBI:144896"/>
    </reaction>
    <physiologicalReaction direction="left-to-right" evidence="1">
        <dbReference type="Rhea" id="RHEA:61625"/>
    </physiologicalReaction>
</comment>
<comment type="cofactor">
    <cofactor evidence="1">
        <name>pyridoxal 5'-phosphate</name>
        <dbReference type="ChEBI" id="CHEBI:597326"/>
    </cofactor>
</comment>
<comment type="pathway">
    <text evidence="1">Amine and polyamine degradation; putrescine degradation; 4-aminobutanal from putrescine (transaminase route): step 1/1.</text>
</comment>
<comment type="similarity">
    <text evidence="1">Belongs to the class-III pyridoxal-phosphate-dependent aminotransferase family. Putrescine aminotransferase subfamily.</text>
</comment>
<comment type="sequence caution" evidence="2">
    <conflict type="erroneous initiation">
        <sequence resource="EMBL-CDS" id="CAR14711"/>
    </conflict>
</comment>
<protein>
    <recommendedName>
        <fullName evidence="1">Putrescine aminotransferase</fullName>
        <shortName evidence="1">PAT</shortName>
        <shortName evidence="1">PATase</shortName>
        <ecNumber evidence="1">2.6.1.82</ecNumber>
    </recommendedName>
    <alternativeName>
        <fullName evidence="1">Cadaverine transaminase</fullName>
    </alternativeName>
    <alternativeName>
        <fullName evidence="1">Diamine transaminase</fullName>
        <ecNumber evidence="1">2.6.1.29</ecNumber>
    </alternativeName>
    <alternativeName>
        <fullName evidence="1">Putrescine transaminase</fullName>
    </alternativeName>
    <alternativeName>
        <fullName evidence="1">Putrescine--2-oxoglutaric acid transaminase</fullName>
    </alternativeName>
</protein>
<evidence type="ECO:0000255" key="1">
    <source>
        <dbReference type="HAMAP-Rule" id="MF_01276"/>
    </source>
</evidence>
<evidence type="ECO:0000305" key="2"/>
<reference key="1">
    <citation type="journal article" date="2009" name="PLoS Genet.">
        <title>Organised genome dynamics in the Escherichia coli species results in highly diverse adaptive paths.</title>
        <authorList>
            <person name="Touchon M."/>
            <person name="Hoede C."/>
            <person name="Tenaillon O."/>
            <person name="Barbe V."/>
            <person name="Baeriswyl S."/>
            <person name="Bidet P."/>
            <person name="Bingen E."/>
            <person name="Bonacorsi S."/>
            <person name="Bouchier C."/>
            <person name="Bouvet O."/>
            <person name="Calteau A."/>
            <person name="Chiapello H."/>
            <person name="Clermont O."/>
            <person name="Cruveiller S."/>
            <person name="Danchin A."/>
            <person name="Diard M."/>
            <person name="Dossat C."/>
            <person name="Karoui M.E."/>
            <person name="Frapy E."/>
            <person name="Garry L."/>
            <person name="Ghigo J.M."/>
            <person name="Gilles A.M."/>
            <person name="Johnson J."/>
            <person name="Le Bouguenec C."/>
            <person name="Lescat M."/>
            <person name="Mangenot S."/>
            <person name="Martinez-Jehanne V."/>
            <person name="Matic I."/>
            <person name="Nassif X."/>
            <person name="Oztas S."/>
            <person name="Petit M.A."/>
            <person name="Pichon C."/>
            <person name="Rouy Z."/>
            <person name="Ruf C.S."/>
            <person name="Schneider D."/>
            <person name="Tourret J."/>
            <person name="Vacherie B."/>
            <person name="Vallenet D."/>
            <person name="Medigue C."/>
            <person name="Rocha E.P.C."/>
            <person name="Denamur E."/>
        </authorList>
    </citation>
    <scope>NUCLEOTIDE SEQUENCE [LARGE SCALE GENOMIC DNA]</scope>
    <source>
        <strain>UMN026 / ExPEC</strain>
    </source>
</reference>
<dbReference type="EC" id="2.6.1.82" evidence="1"/>
<dbReference type="EC" id="2.6.1.29" evidence="1"/>
<dbReference type="EMBL" id="CU928163">
    <property type="protein sequence ID" value="CAR14711.1"/>
    <property type="status" value="ALT_INIT"/>
    <property type="molecule type" value="Genomic_DNA"/>
</dbReference>
<dbReference type="SMR" id="B7ND61"/>
<dbReference type="STRING" id="585056.ECUMN_3556"/>
<dbReference type="KEGG" id="eum:ECUMN_3556"/>
<dbReference type="PATRIC" id="fig|585056.7.peg.3732"/>
<dbReference type="HOGENOM" id="CLU_016922_10_0_6"/>
<dbReference type="UniPathway" id="UPA00188">
    <property type="reaction ID" value="UER00290"/>
</dbReference>
<dbReference type="Proteomes" id="UP000007097">
    <property type="component" value="Chromosome"/>
</dbReference>
<dbReference type="GO" id="GO:0019161">
    <property type="term" value="F:diamine transaminase activity"/>
    <property type="evidence" value="ECO:0007669"/>
    <property type="project" value="UniProtKB-EC"/>
</dbReference>
<dbReference type="GO" id="GO:0042802">
    <property type="term" value="F:identical protein binding"/>
    <property type="evidence" value="ECO:0007669"/>
    <property type="project" value="TreeGrafter"/>
</dbReference>
<dbReference type="GO" id="GO:0033094">
    <property type="term" value="F:putrescine--2-oxoglutarate transaminase activity"/>
    <property type="evidence" value="ECO:0007669"/>
    <property type="project" value="UniProtKB-UniRule"/>
</dbReference>
<dbReference type="GO" id="GO:0030170">
    <property type="term" value="F:pyridoxal phosphate binding"/>
    <property type="evidence" value="ECO:0007669"/>
    <property type="project" value="UniProtKB-UniRule"/>
</dbReference>
<dbReference type="GO" id="GO:0019477">
    <property type="term" value="P:L-lysine catabolic process"/>
    <property type="evidence" value="ECO:0007669"/>
    <property type="project" value="UniProtKB-UniRule"/>
</dbReference>
<dbReference type="GO" id="GO:0009447">
    <property type="term" value="P:putrescine catabolic process"/>
    <property type="evidence" value="ECO:0007669"/>
    <property type="project" value="UniProtKB-UniRule"/>
</dbReference>
<dbReference type="CDD" id="cd00610">
    <property type="entry name" value="OAT_like"/>
    <property type="match status" value="1"/>
</dbReference>
<dbReference type="FunFam" id="3.40.640.10:FF:000004">
    <property type="entry name" value="Acetylornithine aminotransferase"/>
    <property type="match status" value="1"/>
</dbReference>
<dbReference type="Gene3D" id="3.90.1150.10">
    <property type="entry name" value="Aspartate Aminotransferase, domain 1"/>
    <property type="match status" value="1"/>
</dbReference>
<dbReference type="Gene3D" id="3.40.640.10">
    <property type="entry name" value="Type I PLP-dependent aspartate aminotransferase-like (Major domain)"/>
    <property type="match status" value="1"/>
</dbReference>
<dbReference type="HAMAP" id="MF_01276">
    <property type="entry name" value="Putres_aminotrans_3"/>
    <property type="match status" value="1"/>
</dbReference>
<dbReference type="InterPro" id="IPR005814">
    <property type="entry name" value="Aminotrans_3"/>
</dbReference>
<dbReference type="InterPro" id="IPR049704">
    <property type="entry name" value="Aminotrans_3_PPA_site"/>
</dbReference>
<dbReference type="InterPro" id="IPR050103">
    <property type="entry name" value="Class-III_PLP-dep_AT"/>
</dbReference>
<dbReference type="InterPro" id="IPR017747">
    <property type="entry name" value="Putrescine_aminotransferase"/>
</dbReference>
<dbReference type="InterPro" id="IPR015424">
    <property type="entry name" value="PyrdxlP-dep_Trfase"/>
</dbReference>
<dbReference type="InterPro" id="IPR015421">
    <property type="entry name" value="PyrdxlP-dep_Trfase_major"/>
</dbReference>
<dbReference type="InterPro" id="IPR015422">
    <property type="entry name" value="PyrdxlP-dep_Trfase_small"/>
</dbReference>
<dbReference type="NCBIfam" id="NF008570">
    <property type="entry name" value="PRK11522.1"/>
    <property type="match status" value="1"/>
</dbReference>
<dbReference type="NCBIfam" id="TIGR03372">
    <property type="entry name" value="putres_am_tran"/>
    <property type="match status" value="1"/>
</dbReference>
<dbReference type="PANTHER" id="PTHR11986">
    <property type="entry name" value="AMINOTRANSFERASE CLASS III"/>
    <property type="match status" value="1"/>
</dbReference>
<dbReference type="PANTHER" id="PTHR11986:SF112">
    <property type="entry name" value="PUTRESCINE AMINOTRANSFERASE"/>
    <property type="match status" value="1"/>
</dbReference>
<dbReference type="Pfam" id="PF00202">
    <property type="entry name" value="Aminotran_3"/>
    <property type="match status" value="1"/>
</dbReference>
<dbReference type="PIRSF" id="PIRSF000521">
    <property type="entry name" value="Transaminase_4ab_Lys_Orn"/>
    <property type="match status" value="1"/>
</dbReference>
<dbReference type="SUPFAM" id="SSF53383">
    <property type="entry name" value="PLP-dependent transferases"/>
    <property type="match status" value="1"/>
</dbReference>
<dbReference type="PROSITE" id="PS00600">
    <property type="entry name" value="AA_TRANSFER_CLASS_3"/>
    <property type="match status" value="1"/>
</dbReference>
<gene>
    <name evidence="1" type="primary">patA</name>
    <name type="ordered locus">ECUMN_3556</name>
</gene>
<feature type="chain" id="PRO_0000379555" description="Putrescine aminotransferase">
    <location>
        <begin position="1"/>
        <end position="459"/>
    </location>
</feature>
<feature type="binding site" description="in other chain" evidence="1">
    <location>
        <begin position="150"/>
        <end position="151"/>
    </location>
    <ligand>
        <name>pyridoxal 5'-phosphate</name>
        <dbReference type="ChEBI" id="CHEBI:597326"/>
        <note>ligand shared between dimeric partners</note>
    </ligand>
</feature>
<feature type="binding site" description="in other chain" evidence="1">
    <location>
        <position position="274"/>
    </location>
    <ligand>
        <name>pyridoxal 5'-phosphate</name>
        <dbReference type="ChEBI" id="CHEBI:597326"/>
        <note>ligand shared between dimeric partners</note>
    </ligand>
</feature>
<feature type="binding site" evidence="1">
    <location>
        <position position="332"/>
    </location>
    <ligand>
        <name>pyridoxal 5'-phosphate</name>
        <dbReference type="ChEBI" id="CHEBI:597326"/>
        <note>ligand shared between dimeric partners</note>
    </ligand>
</feature>
<feature type="modified residue" description="N6-(pyridoxal phosphate)lysine" evidence="1">
    <location>
        <position position="300"/>
    </location>
</feature>
<accession>B7ND61</accession>
<proteinExistence type="inferred from homology"/>